<organism>
    <name type="scientific">Oryza sativa subsp. japonica</name>
    <name type="common">Rice</name>
    <dbReference type="NCBI Taxonomy" id="39947"/>
    <lineage>
        <taxon>Eukaryota</taxon>
        <taxon>Viridiplantae</taxon>
        <taxon>Streptophyta</taxon>
        <taxon>Embryophyta</taxon>
        <taxon>Tracheophyta</taxon>
        <taxon>Spermatophyta</taxon>
        <taxon>Magnoliopsida</taxon>
        <taxon>Liliopsida</taxon>
        <taxon>Poales</taxon>
        <taxon>Poaceae</taxon>
        <taxon>BOP clade</taxon>
        <taxon>Oryzoideae</taxon>
        <taxon>Oryzeae</taxon>
        <taxon>Oryzinae</taxon>
        <taxon>Oryza</taxon>
        <taxon>Oryza sativa</taxon>
    </lineage>
</organism>
<dbReference type="EC" id="3.1.3.16"/>
<dbReference type="EMBL" id="AP006068">
    <property type="protein sequence ID" value="BAD17755.1"/>
    <property type="molecule type" value="Genomic_DNA"/>
</dbReference>
<dbReference type="EMBL" id="AP008208">
    <property type="protein sequence ID" value="BAF09092.1"/>
    <property type="molecule type" value="Genomic_DNA"/>
</dbReference>
<dbReference type="EMBL" id="AP014958">
    <property type="protein sequence ID" value="BAS79319.1"/>
    <property type="molecule type" value="Genomic_DNA"/>
</dbReference>
<dbReference type="EMBL" id="CM000139">
    <property type="protein sequence ID" value="EEE57222.1"/>
    <property type="molecule type" value="Genomic_DNA"/>
</dbReference>
<dbReference type="EMBL" id="AK069840">
    <property type="protein sequence ID" value="BAG91631.1"/>
    <property type="molecule type" value="mRNA"/>
</dbReference>
<dbReference type="RefSeq" id="XP_015625237.1">
    <property type="nucleotide sequence ID" value="XM_015769751.1"/>
</dbReference>
<dbReference type="SMR" id="Q6YTI2"/>
<dbReference type="FunCoup" id="Q6YTI2">
    <property type="interactions" value="642"/>
</dbReference>
<dbReference type="STRING" id="39947.Q6YTI2"/>
<dbReference type="PaxDb" id="39947-Q6YTI2"/>
<dbReference type="EnsemblPlants" id="Os02t0567200-01">
    <property type="protein sequence ID" value="Os02t0567200-01"/>
    <property type="gene ID" value="Os02g0567200"/>
</dbReference>
<dbReference type="Gramene" id="Os02t0567200-01">
    <property type="protein sequence ID" value="Os02t0567200-01"/>
    <property type="gene ID" value="Os02g0567200"/>
</dbReference>
<dbReference type="KEGG" id="dosa:Os02g0567200"/>
<dbReference type="eggNOG" id="KOG0698">
    <property type="taxonomic scope" value="Eukaryota"/>
</dbReference>
<dbReference type="HOGENOM" id="CLU_013173_3_1_1"/>
<dbReference type="InParanoid" id="Q6YTI2"/>
<dbReference type="OMA" id="GDQDVGQ"/>
<dbReference type="OrthoDB" id="10264738at2759"/>
<dbReference type="Proteomes" id="UP000000763">
    <property type="component" value="Chromosome 2"/>
</dbReference>
<dbReference type="Proteomes" id="UP000007752">
    <property type="component" value="Chromosome 2"/>
</dbReference>
<dbReference type="Proteomes" id="UP000059680">
    <property type="component" value="Chromosome 2"/>
</dbReference>
<dbReference type="GO" id="GO:0046872">
    <property type="term" value="F:metal ion binding"/>
    <property type="evidence" value="ECO:0007669"/>
    <property type="project" value="UniProtKB-KW"/>
</dbReference>
<dbReference type="GO" id="GO:0004722">
    <property type="term" value="F:protein serine/threonine phosphatase activity"/>
    <property type="evidence" value="ECO:0000318"/>
    <property type="project" value="GO_Central"/>
</dbReference>
<dbReference type="GO" id="GO:1902531">
    <property type="term" value="P:regulation of intracellular signal transduction"/>
    <property type="evidence" value="ECO:0000318"/>
    <property type="project" value="GO_Central"/>
</dbReference>
<dbReference type="CDD" id="cd00143">
    <property type="entry name" value="PP2Cc"/>
    <property type="match status" value="1"/>
</dbReference>
<dbReference type="FunFam" id="3.60.40.10:FF:000022">
    <property type="entry name" value="probable protein phosphatase 2C 12"/>
    <property type="match status" value="1"/>
</dbReference>
<dbReference type="Gene3D" id="3.60.40.10">
    <property type="entry name" value="PPM-type phosphatase domain"/>
    <property type="match status" value="1"/>
</dbReference>
<dbReference type="InterPro" id="IPR015655">
    <property type="entry name" value="PP2C"/>
</dbReference>
<dbReference type="InterPro" id="IPR036457">
    <property type="entry name" value="PPM-type-like_dom_sf"/>
</dbReference>
<dbReference type="InterPro" id="IPR001932">
    <property type="entry name" value="PPM-type_phosphatase-like_dom"/>
</dbReference>
<dbReference type="PANTHER" id="PTHR47992">
    <property type="entry name" value="PROTEIN PHOSPHATASE"/>
    <property type="match status" value="1"/>
</dbReference>
<dbReference type="Pfam" id="PF00481">
    <property type="entry name" value="PP2C"/>
    <property type="match status" value="1"/>
</dbReference>
<dbReference type="SMART" id="SM00331">
    <property type="entry name" value="PP2C_SIG"/>
    <property type="match status" value="1"/>
</dbReference>
<dbReference type="SMART" id="SM00332">
    <property type="entry name" value="PP2Cc"/>
    <property type="match status" value="1"/>
</dbReference>
<dbReference type="SUPFAM" id="SSF81606">
    <property type="entry name" value="PP2C-like"/>
    <property type="match status" value="1"/>
</dbReference>
<dbReference type="PROSITE" id="PS51746">
    <property type="entry name" value="PPM_2"/>
    <property type="match status" value="1"/>
</dbReference>
<protein>
    <recommendedName>
        <fullName>Probable protein phosphatase 2C 15</fullName>
        <shortName>OsPP2C15</shortName>
        <ecNumber>3.1.3.16</ecNumber>
    </recommendedName>
</protein>
<reference key="1">
    <citation type="journal article" date="2005" name="Nature">
        <title>The map-based sequence of the rice genome.</title>
        <authorList>
            <consortium name="International rice genome sequencing project (IRGSP)"/>
        </authorList>
    </citation>
    <scope>NUCLEOTIDE SEQUENCE [LARGE SCALE GENOMIC DNA]</scope>
    <source>
        <strain>cv. Nipponbare</strain>
    </source>
</reference>
<reference key="2">
    <citation type="journal article" date="2008" name="Nucleic Acids Res.">
        <title>The rice annotation project database (RAP-DB): 2008 update.</title>
        <authorList>
            <consortium name="The rice annotation project (RAP)"/>
        </authorList>
    </citation>
    <scope>GENOME REANNOTATION</scope>
    <source>
        <strain>cv. Nipponbare</strain>
    </source>
</reference>
<reference key="3">
    <citation type="journal article" date="2013" name="Rice">
        <title>Improvement of the Oryza sativa Nipponbare reference genome using next generation sequence and optical map data.</title>
        <authorList>
            <person name="Kawahara Y."/>
            <person name="de la Bastide M."/>
            <person name="Hamilton J.P."/>
            <person name="Kanamori H."/>
            <person name="McCombie W.R."/>
            <person name="Ouyang S."/>
            <person name="Schwartz D.C."/>
            <person name="Tanaka T."/>
            <person name="Wu J."/>
            <person name="Zhou S."/>
            <person name="Childs K.L."/>
            <person name="Davidson R.M."/>
            <person name="Lin H."/>
            <person name="Quesada-Ocampo L."/>
            <person name="Vaillancourt B."/>
            <person name="Sakai H."/>
            <person name="Lee S.S."/>
            <person name="Kim J."/>
            <person name="Numa H."/>
            <person name="Itoh T."/>
            <person name="Buell C.R."/>
            <person name="Matsumoto T."/>
        </authorList>
    </citation>
    <scope>GENOME REANNOTATION</scope>
    <source>
        <strain>cv. Nipponbare</strain>
    </source>
</reference>
<reference key="4">
    <citation type="journal article" date="2005" name="PLoS Biol.">
        <title>The genomes of Oryza sativa: a history of duplications.</title>
        <authorList>
            <person name="Yu J."/>
            <person name="Wang J."/>
            <person name="Lin W."/>
            <person name="Li S."/>
            <person name="Li H."/>
            <person name="Zhou J."/>
            <person name="Ni P."/>
            <person name="Dong W."/>
            <person name="Hu S."/>
            <person name="Zeng C."/>
            <person name="Zhang J."/>
            <person name="Zhang Y."/>
            <person name="Li R."/>
            <person name="Xu Z."/>
            <person name="Li S."/>
            <person name="Li X."/>
            <person name="Zheng H."/>
            <person name="Cong L."/>
            <person name="Lin L."/>
            <person name="Yin J."/>
            <person name="Geng J."/>
            <person name="Li G."/>
            <person name="Shi J."/>
            <person name="Liu J."/>
            <person name="Lv H."/>
            <person name="Li J."/>
            <person name="Wang J."/>
            <person name="Deng Y."/>
            <person name="Ran L."/>
            <person name="Shi X."/>
            <person name="Wang X."/>
            <person name="Wu Q."/>
            <person name="Li C."/>
            <person name="Ren X."/>
            <person name="Wang J."/>
            <person name="Wang X."/>
            <person name="Li D."/>
            <person name="Liu D."/>
            <person name="Zhang X."/>
            <person name="Ji Z."/>
            <person name="Zhao W."/>
            <person name="Sun Y."/>
            <person name="Zhang Z."/>
            <person name="Bao J."/>
            <person name="Han Y."/>
            <person name="Dong L."/>
            <person name="Ji J."/>
            <person name="Chen P."/>
            <person name="Wu S."/>
            <person name="Liu J."/>
            <person name="Xiao Y."/>
            <person name="Bu D."/>
            <person name="Tan J."/>
            <person name="Yang L."/>
            <person name="Ye C."/>
            <person name="Zhang J."/>
            <person name="Xu J."/>
            <person name="Zhou Y."/>
            <person name="Yu Y."/>
            <person name="Zhang B."/>
            <person name="Zhuang S."/>
            <person name="Wei H."/>
            <person name="Liu B."/>
            <person name="Lei M."/>
            <person name="Yu H."/>
            <person name="Li Y."/>
            <person name="Xu H."/>
            <person name="Wei S."/>
            <person name="He X."/>
            <person name="Fang L."/>
            <person name="Zhang Z."/>
            <person name="Zhang Y."/>
            <person name="Huang X."/>
            <person name="Su Z."/>
            <person name="Tong W."/>
            <person name="Li J."/>
            <person name="Tong Z."/>
            <person name="Li S."/>
            <person name="Ye J."/>
            <person name="Wang L."/>
            <person name="Fang L."/>
            <person name="Lei T."/>
            <person name="Chen C.-S."/>
            <person name="Chen H.-C."/>
            <person name="Xu Z."/>
            <person name="Li H."/>
            <person name="Huang H."/>
            <person name="Zhang F."/>
            <person name="Xu H."/>
            <person name="Li N."/>
            <person name="Zhao C."/>
            <person name="Li S."/>
            <person name="Dong L."/>
            <person name="Huang Y."/>
            <person name="Li L."/>
            <person name="Xi Y."/>
            <person name="Qi Q."/>
            <person name="Li W."/>
            <person name="Zhang B."/>
            <person name="Hu W."/>
            <person name="Zhang Y."/>
            <person name="Tian X."/>
            <person name="Jiao Y."/>
            <person name="Liang X."/>
            <person name="Jin J."/>
            <person name="Gao L."/>
            <person name="Zheng W."/>
            <person name="Hao B."/>
            <person name="Liu S.-M."/>
            <person name="Wang W."/>
            <person name="Yuan L."/>
            <person name="Cao M."/>
            <person name="McDermott J."/>
            <person name="Samudrala R."/>
            <person name="Wang J."/>
            <person name="Wong G.K.-S."/>
            <person name="Yang H."/>
        </authorList>
    </citation>
    <scope>NUCLEOTIDE SEQUENCE [LARGE SCALE GENOMIC DNA]</scope>
    <source>
        <strain>cv. Nipponbare</strain>
    </source>
</reference>
<reference key="5">
    <citation type="journal article" date="2003" name="Science">
        <title>Collection, mapping, and annotation of over 28,000 cDNA clones from japonica rice.</title>
        <authorList>
            <consortium name="The rice full-length cDNA consortium"/>
        </authorList>
    </citation>
    <scope>NUCLEOTIDE SEQUENCE [LARGE SCALE MRNA]</scope>
    <source>
        <strain>cv. Nipponbare</strain>
    </source>
</reference>
<reference key="6">
    <citation type="journal article" date="2008" name="BMC Genomics">
        <title>Genome-wide and expression analysis of protein phosphatase 2C in rice and Arabidopsis.</title>
        <authorList>
            <person name="Xue T."/>
            <person name="Wang D."/>
            <person name="Zhang S."/>
            <person name="Ehlting J."/>
            <person name="Ni F."/>
            <person name="Jacab S."/>
            <person name="Zheng C."/>
            <person name="Zhong Y."/>
        </authorList>
    </citation>
    <scope>GENE FAMILY</scope>
    <scope>NOMENCLATURE</scope>
</reference>
<proteinExistence type="evidence at transcript level"/>
<sequence length="442" mass="48014">MSTRSKSVPVPAGGGAATVPLAVLLRREVVSEKTAAERPELQVGLFSQAKKGEDYTFLKPDCERLPGVPSSSFSAFGLFDGHNGNGAAIYTKENLLSNILTAIPADLNREDWLAALPRAMVAAFVKTDKDFQTKARSSGTTVTFVIIDGLFITVASVGDSRCVLEAEGSIYHLSADHRFDASKEEVDRVTESGGDVGRLNVVGGAEIGPLRCWPGGLCLSRSIGDQDVGQFIVPVPYVKQVKLSTAGGRLIISSDGVWDVLTAEVAFNCSRTLPPEAAAEQIVKEAVQQKGLRDDTTCIVVDILPDKANLTMPHTKKQPGMGVFKNMFRKKTPSDSSSHTDREYMDPDIVEEIFEDGCAFLSKRLDSEYPVRNMFKLFICAICQVELKPSQGISVHEDSSQPGNLRRWDGPFLCQGCQEKKEAMEGKRRSRDSSSRNSGSSE</sequence>
<feature type="chain" id="PRO_0000363261" description="Probable protein phosphatase 2C 15">
    <location>
        <begin position="1"/>
        <end position="442"/>
    </location>
</feature>
<feature type="domain" description="PPM-type phosphatase" evidence="2">
    <location>
        <begin position="35"/>
        <end position="303"/>
    </location>
</feature>
<feature type="region of interest" description="Disordered" evidence="3">
    <location>
        <begin position="420"/>
        <end position="442"/>
    </location>
</feature>
<feature type="compositionally biased region" description="Basic and acidic residues" evidence="3">
    <location>
        <begin position="420"/>
        <end position="434"/>
    </location>
</feature>
<feature type="binding site" evidence="1">
    <location>
        <position position="80"/>
    </location>
    <ligand>
        <name>Mn(2+)</name>
        <dbReference type="ChEBI" id="CHEBI:29035"/>
        <label>1</label>
    </ligand>
</feature>
<feature type="binding site" evidence="1">
    <location>
        <position position="80"/>
    </location>
    <ligand>
        <name>Mn(2+)</name>
        <dbReference type="ChEBI" id="CHEBI:29035"/>
        <label>2</label>
    </ligand>
</feature>
<feature type="binding site" evidence="1">
    <location>
        <position position="81"/>
    </location>
    <ligand>
        <name>Mn(2+)</name>
        <dbReference type="ChEBI" id="CHEBI:29035"/>
        <label>1</label>
    </ligand>
</feature>
<feature type="binding site" evidence="1">
    <location>
        <position position="255"/>
    </location>
    <ligand>
        <name>Mn(2+)</name>
        <dbReference type="ChEBI" id="CHEBI:29035"/>
        <label>2</label>
    </ligand>
</feature>
<feature type="binding site" evidence="1">
    <location>
        <position position="294"/>
    </location>
    <ligand>
        <name>Mn(2+)</name>
        <dbReference type="ChEBI" id="CHEBI:29035"/>
        <label>2</label>
    </ligand>
</feature>
<comment type="catalytic activity">
    <reaction>
        <text>O-phospho-L-seryl-[protein] + H2O = L-seryl-[protein] + phosphate</text>
        <dbReference type="Rhea" id="RHEA:20629"/>
        <dbReference type="Rhea" id="RHEA-COMP:9863"/>
        <dbReference type="Rhea" id="RHEA-COMP:11604"/>
        <dbReference type="ChEBI" id="CHEBI:15377"/>
        <dbReference type="ChEBI" id="CHEBI:29999"/>
        <dbReference type="ChEBI" id="CHEBI:43474"/>
        <dbReference type="ChEBI" id="CHEBI:83421"/>
        <dbReference type="EC" id="3.1.3.16"/>
    </reaction>
</comment>
<comment type="catalytic activity">
    <reaction>
        <text>O-phospho-L-threonyl-[protein] + H2O = L-threonyl-[protein] + phosphate</text>
        <dbReference type="Rhea" id="RHEA:47004"/>
        <dbReference type="Rhea" id="RHEA-COMP:11060"/>
        <dbReference type="Rhea" id="RHEA-COMP:11605"/>
        <dbReference type="ChEBI" id="CHEBI:15377"/>
        <dbReference type="ChEBI" id="CHEBI:30013"/>
        <dbReference type="ChEBI" id="CHEBI:43474"/>
        <dbReference type="ChEBI" id="CHEBI:61977"/>
        <dbReference type="EC" id="3.1.3.16"/>
    </reaction>
</comment>
<comment type="cofactor">
    <cofactor evidence="1">
        <name>Mg(2+)</name>
        <dbReference type="ChEBI" id="CHEBI:18420"/>
    </cofactor>
    <cofactor evidence="1">
        <name>Mn(2+)</name>
        <dbReference type="ChEBI" id="CHEBI:29035"/>
    </cofactor>
    <text evidence="1">Binds 2 magnesium or manganese ions per subunit.</text>
</comment>
<comment type="similarity">
    <text evidence="4">Belongs to the PP2C family.</text>
</comment>
<gene>
    <name type="ordered locus">Os02g0567200</name>
    <name type="ordered locus">LOC_Os02g35910</name>
    <name evidence="5" type="ORF">OsJ_07193</name>
    <name type="ORF">P0020D05.19</name>
</gene>
<evidence type="ECO:0000250" key="1"/>
<evidence type="ECO:0000255" key="2">
    <source>
        <dbReference type="PROSITE-ProRule" id="PRU01082"/>
    </source>
</evidence>
<evidence type="ECO:0000256" key="3">
    <source>
        <dbReference type="SAM" id="MobiDB-lite"/>
    </source>
</evidence>
<evidence type="ECO:0000305" key="4"/>
<evidence type="ECO:0000312" key="5">
    <source>
        <dbReference type="EMBL" id="EEE57222.1"/>
    </source>
</evidence>
<accession>Q6YTI2</accession>
<accession>B9F0N0</accession>
<keyword id="KW-0378">Hydrolase</keyword>
<keyword id="KW-0460">Magnesium</keyword>
<keyword id="KW-0464">Manganese</keyword>
<keyword id="KW-0479">Metal-binding</keyword>
<keyword id="KW-0904">Protein phosphatase</keyword>
<keyword id="KW-1185">Reference proteome</keyword>
<name>P2C15_ORYSJ</name>